<organism>
    <name type="scientific">Salmonella gallinarum (strain 287/91 / NCTC 13346)</name>
    <dbReference type="NCBI Taxonomy" id="550538"/>
    <lineage>
        <taxon>Bacteria</taxon>
        <taxon>Pseudomonadati</taxon>
        <taxon>Pseudomonadota</taxon>
        <taxon>Gammaproteobacteria</taxon>
        <taxon>Enterobacterales</taxon>
        <taxon>Enterobacteriaceae</taxon>
        <taxon>Salmonella</taxon>
    </lineage>
</organism>
<protein>
    <recommendedName>
        <fullName evidence="1">Phosphoglucosamine mutase</fullName>
        <ecNumber evidence="1">5.4.2.10</ecNumber>
    </recommendedName>
</protein>
<sequence length="445" mass="47441">MSNRKYFGTDGIRGRVGNAPITPDFVLKLGWAAGKVLARHGSRKIIIGKDTRISGYMLESALEAGLAAAGLSASFTGPMPTPAVAYLTRTFRAEAGIVISASHNPFYDNGIKFFSIDGTKLPDDVEEAIEAEMEKEITCVDSAELGKASRIVDAAGRYIEFCKGTFPNELSLNGLKVVVDCANGATYHIAPNVLRELGATVIAIGCEPNGVNINEEVGATDVRALQARVLAEKADLGIALDGDGDRVIMVDHEGNKVDGDQIMYIIAREGLRQGQLRGGAVGTLMSNMGLELALKQLGIPFARAKVGDRYVLEKLQEKGWRIGAENSGHVILLDKTTTGDGIVAGLQVLAAMVRNHMSLHDLCSGMKMFPQILVNVRYTAGSGDPLENEAVKAVTADVEATLGNRGRVLLRKSGTEPLIRVMVEGEDEAQVTAFAHRIADAVKAV</sequence>
<comment type="function">
    <text evidence="1">Catalyzes the conversion of glucosamine-6-phosphate to glucosamine-1-phosphate.</text>
</comment>
<comment type="catalytic activity">
    <reaction evidence="1">
        <text>alpha-D-glucosamine 1-phosphate = D-glucosamine 6-phosphate</text>
        <dbReference type="Rhea" id="RHEA:23424"/>
        <dbReference type="ChEBI" id="CHEBI:58516"/>
        <dbReference type="ChEBI" id="CHEBI:58725"/>
        <dbReference type="EC" id="5.4.2.10"/>
    </reaction>
</comment>
<comment type="cofactor">
    <cofactor evidence="1">
        <name>Mg(2+)</name>
        <dbReference type="ChEBI" id="CHEBI:18420"/>
    </cofactor>
    <text evidence="1">Binds 1 Mg(2+) ion per subunit.</text>
</comment>
<comment type="PTM">
    <text evidence="1">Activated by phosphorylation.</text>
</comment>
<comment type="similarity">
    <text evidence="1">Belongs to the phosphohexose mutase family.</text>
</comment>
<accession>B5REP2</accession>
<evidence type="ECO:0000255" key="1">
    <source>
        <dbReference type="HAMAP-Rule" id="MF_01554"/>
    </source>
</evidence>
<proteinExistence type="inferred from homology"/>
<keyword id="KW-0413">Isomerase</keyword>
<keyword id="KW-0460">Magnesium</keyword>
<keyword id="KW-0479">Metal-binding</keyword>
<keyword id="KW-0597">Phosphoprotein</keyword>
<reference key="1">
    <citation type="journal article" date="2008" name="Genome Res.">
        <title>Comparative genome analysis of Salmonella enteritidis PT4 and Salmonella gallinarum 287/91 provides insights into evolutionary and host adaptation pathways.</title>
        <authorList>
            <person name="Thomson N.R."/>
            <person name="Clayton D.J."/>
            <person name="Windhorst D."/>
            <person name="Vernikos G."/>
            <person name="Davidson S."/>
            <person name="Churcher C."/>
            <person name="Quail M.A."/>
            <person name="Stevens M."/>
            <person name="Jones M.A."/>
            <person name="Watson M."/>
            <person name="Barron A."/>
            <person name="Layton A."/>
            <person name="Pickard D."/>
            <person name="Kingsley R.A."/>
            <person name="Bignell A."/>
            <person name="Clark L."/>
            <person name="Harris B."/>
            <person name="Ormond D."/>
            <person name="Abdellah Z."/>
            <person name="Brooks K."/>
            <person name="Cherevach I."/>
            <person name="Chillingworth T."/>
            <person name="Woodward J."/>
            <person name="Norberczak H."/>
            <person name="Lord A."/>
            <person name="Arrowsmith C."/>
            <person name="Jagels K."/>
            <person name="Moule S."/>
            <person name="Mungall K."/>
            <person name="Saunders M."/>
            <person name="Whitehead S."/>
            <person name="Chabalgoity J.A."/>
            <person name="Maskell D."/>
            <person name="Humphreys T."/>
            <person name="Roberts M."/>
            <person name="Barrow P.A."/>
            <person name="Dougan G."/>
            <person name="Parkhill J."/>
        </authorList>
    </citation>
    <scope>NUCLEOTIDE SEQUENCE [LARGE SCALE GENOMIC DNA]</scope>
    <source>
        <strain>287/91 / NCTC 13346</strain>
    </source>
</reference>
<gene>
    <name evidence="1" type="primary">glmM</name>
    <name type="ordered locus">SG3184</name>
</gene>
<feature type="chain" id="PRO_1000201136" description="Phosphoglucosamine mutase">
    <location>
        <begin position="1"/>
        <end position="445"/>
    </location>
</feature>
<feature type="active site" description="Phosphoserine intermediate" evidence="1">
    <location>
        <position position="102"/>
    </location>
</feature>
<feature type="binding site" description="via phosphate group" evidence="1">
    <location>
        <position position="102"/>
    </location>
    <ligand>
        <name>Mg(2+)</name>
        <dbReference type="ChEBI" id="CHEBI:18420"/>
    </ligand>
</feature>
<feature type="binding site" evidence="1">
    <location>
        <position position="241"/>
    </location>
    <ligand>
        <name>Mg(2+)</name>
        <dbReference type="ChEBI" id="CHEBI:18420"/>
    </ligand>
</feature>
<feature type="binding site" evidence="1">
    <location>
        <position position="243"/>
    </location>
    <ligand>
        <name>Mg(2+)</name>
        <dbReference type="ChEBI" id="CHEBI:18420"/>
    </ligand>
</feature>
<feature type="binding site" evidence="1">
    <location>
        <position position="245"/>
    </location>
    <ligand>
        <name>Mg(2+)</name>
        <dbReference type="ChEBI" id="CHEBI:18420"/>
    </ligand>
</feature>
<feature type="modified residue" description="Phosphoserine" evidence="1">
    <location>
        <position position="102"/>
    </location>
</feature>
<dbReference type="EC" id="5.4.2.10" evidence="1"/>
<dbReference type="EMBL" id="AM933173">
    <property type="protein sequence ID" value="CAR38982.1"/>
    <property type="molecule type" value="Genomic_DNA"/>
</dbReference>
<dbReference type="RefSeq" id="WP_000071169.1">
    <property type="nucleotide sequence ID" value="NC_011274.1"/>
</dbReference>
<dbReference type="SMR" id="B5REP2"/>
<dbReference type="KEGG" id="seg:SG3184"/>
<dbReference type="HOGENOM" id="CLU_016950_7_0_6"/>
<dbReference type="Proteomes" id="UP000008321">
    <property type="component" value="Chromosome"/>
</dbReference>
<dbReference type="GO" id="GO:0005829">
    <property type="term" value="C:cytosol"/>
    <property type="evidence" value="ECO:0007669"/>
    <property type="project" value="TreeGrafter"/>
</dbReference>
<dbReference type="GO" id="GO:0000287">
    <property type="term" value="F:magnesium ion binding"/>
    <property type="evidence" value="ECO:0007669"/>
    <property type="project" value="UniProtKB-UniRule"/>
</dbReference>
<dbReference type="GO" id="GO:0008966">
    <property type="term" value="F:phosphoglucosamine mutase activity"/>
    <property type="evidence" value="ECO:0007669"/>
    <property type="project" value="UniProtKB-UniRule"/>
</dbReference>
<dbReference type="GO" id="GO:0004615">
    <property type="term" value="F:phosphomannomutase activity"/>
    <property type="evidence" value="ECO:0007669"/>
    <property type="project" value="TreeGrafter"/>
</dbReference>
<dbReference type="GO" id="GO:0005975">
    <property type="term" value="P:carbohydrate metabolic process"/>
    <property type="evidence" value="ECO:0007669"/>
    <property type="project" value="InterPro"/>
</dbReference>
<dbReference type="GO" id="GO:0009252">
    <property type="term" value="P:peptidoglycan biosynthetic process"/>
    <property type="evidence" value="ECO:0007669"/>
    <property type="project" value="TreeGrafter"/>
</dbReference>
<dbReference type="GO" id="GO:0006048">
    <property type="term" value="P:UDP-N-acetylglucosamine biosynthetic process"/>
    <property type="evidence" value="ECO:0007669"/>
    <property type="project" value="TreeGrafter"/>
</dbReference>
<dbReference type="CDD" id="cd05802">
    <property type="entry name" value="GlmM"/>
    <property type="match status" value="1"/>
</dbReference>
<dbReference type="FunFam" id="3.30.310.50:FF:000001">
    <property type="entry name" value="Phosphoglucosamine mutase"/>
    <property type="match status" value="1"/>
</dbReference>
<dbReference type="FunFam" id="3.40.120.10:FF:000001">
    <property type="entry name" value="Phosphoglucosamine mutase"/>
    <property type="match status" value="1"/>
</dbReference>
<dbReference type="FunFam" id="3.40.120.10:FF:000002">
    <property type="entry name" value="Phosphoglucosamine mutase"/>
    <property type="match status" value="1"/>
</dbReference>
<dbReference type="Gene3D" id="3.40.120.10">
    <property type="entry name" value="Alpha-D-Glucose-1,6-Bisphosphate, subunit A, domain 3"/>
    <property type="match status" value="3"/>
</dbReference>
<dbReference type="Gene3D" id="3.30.310.50">
    <property type="entry name" value="Alpha-D-phosphohexomutase, C-terminal domain"/>
    <property type="match status" value="1"/>
</dbReference>
<dbReference type="HAMAP" id="MF_01554_B">
    <property type="entry name" value="GlmM_B"/>
    <property type="match status" value="1"/>
</dbReference>
<dbReference type="InterPro" id="IPR005844">
    <property type="entry name" value="A-D-PHexomutase_a/b/a-I"/>
</dbReference>
<dbReference type="InterPro" id="IPR016055">
    <property type="entry name" value="A-D-PHexomutase_a/b/a-I/II/III"/>
</dbReference>
<dbReference type="InterPro" id="IPR005845">
    <property type="entry name" value="A-D-PHexomutase_a/b/a-II"/>
</dbReference>
<dbReference type="InterPro" id="IPR005846">
    <property type="entry name" value="A-D-PHexomutase_a/b/a-III"/>
</dbReference>
<dbReference type="InterPro" id="IPR005843">
    <property type="entry name" value="A-D-PHexomutase_C"/>
</dbReference>
<dbReference type="InterPro" id="IPR036900">
    <property type="entry name" value="A-D-PHexomutase_C_sf"/>
</dbReference>
<dbReference type="InterPro" id="IPR016066">
    <property type="entry name" value="A-D-PHexomutase_CS"/>
</dbReference>
<dbReference type="InterPro" id="IPR005841">
    <property type="entry name" value="Alpha-D-phosphohexomutase_SF"/>
</dbReference>
<dbReference type="InterPro" id="IPR006352">
    <property type="entry name" value="GlmM_bact"/>
</dbReference>
<dbReference type="InterPro" id="IPR050060">
    <property type="entry name" value="Phosphoglucosamine_mutase"/>
</dbReference>
<dbReference type="NCBIfam" id="TIGR01455">
    <property type="entry name" value="glmM"/>
    <property type="match status" value="1"/>
</dbReference>
<dbReference type="NCBIfam" id="NF008139">
    <property type="entry name" value="PRK10887.1"/>
    <property type="match status" value="1"/>
</dbReference>
<dbReference type="PANTHER" id="PTHR42946:SF1">
    <property type="entry name" value="PHOSPHOGLUCOMUTASE (ALPHA-D-GLUCOSE-1,6-BISPHOSPHATE-DEPENDENT)"/>
    <property type="match status" value="1"/>
</dbReference>
<dbReference type="PANTHER" id="PTHR42946">
    <property type="entry name" value="PHOSPHOHEXOSE MUTASE"/>
    <property type="match status" value="1"/>
</dbReference>
<dbReference type="Pfam" id="PF02878">
    <property type="entry name" value="PGM_PMM_I"/>
    <property type="match status" value="1"/>
</dbReference>
<dbReference type="Pfam" id="PF02879">
    <property type="entry name" value="PGM_PMM_II"/>
    <property type="match status" value="1"/>
</dbReference>
<dbReference type="Pfam" id="PF02880">
    <property type="entry name" value="PGM_PMM_III"/>
    <property type="match status" value="1"/>
</dbReference>
<dbReference type="Pfam" id="PF00408">
    <property type="entry name" value="PGM_PMM_IV"/>
    <property type="match status" value="1"/>
</dbReference>
<dbReference type="PRINTS" id="PR00509">
    <property type="entry name" value="PGMPMM"/>
</dbReference>
<dbReference type="SUPFAM" id="SSF55957">
    <property type="entry name" value="Phosphoglucomutase, C-terminal domain"/>
    <property type="match status" value="1"/>
</dbReference>
<dbReference type="SUPFAM" id="SSF53738">
    <property type="entry name" value="Phosphoglucomutase, first 3 domains"/>
    <property type="match status" value="3"/>
</dbReference>
<dbReference type="PROSITE" id="PS00710">
    <property type="entry name" value="PGM_PMM"/>
    <property type="match status" value="1"/>
</dbReference>
<name>GLMM_SALG2</name>